<accession>Q1R9Y4</accession>
<reference key="1">
    <citation type="journal article" date="2006" name="Proc. Natl. Acad. Sci. U.S.A.">
        <title>Identification of genes subject to positive selection in uropathogenic strains of Escherichia coli: a comparative genomics approach.</title>
        <authorList>
            <person name="Chen S.L."/>
            <person name="Hung C.-S."/>
            <person name="Xu J."/>
            <person name="Reigstad C.S."/>
            <person name="Magrini V."/>
            <person name="Sabo A."/>
            <person name="Blasiar D."/>
            <person name="Bieri T."/>
            <person name="Meyer R.R."/>
            <person name="Ozersky P."/>
            <person name="Armstrong J.R."/>
            <person name="Fulton R.S."/>
            <person name="Latreille J.P."/>
            <person name="Spieth J."/>
            <person name="Hooton T.M."/>
            <person name="Mardis E.R."/>
            <person name="Hultgren S.J."/>
            <person name="Gordon J.I."/>
        </authorList>
    </citation>
    <scope>NUCLEOTIDE SEQUENCE [LARGE SCALE GENOMIC DNA]</scope>
    <source>
        <strain>UTI89 / UPEC</strain>
    </source>
</reference>
<keyword id="KW-0067">ATP-binding</keyword>
<keyword id="KW-0963">Cytoplasm</keyword>
<keyword id="KW-0418">Kinase</keyword>
<keyword id="KW-0444">Lipid biosynthesis</keyword>
<keyword id="KW-0443">Lipid metabolism</keyword>
<keyword id="KW-0460">Magnesium</keyword>
<keyword id="KW-0479">Metal-binding</keyword>
<keyword id="KW-0547">Nucleotide-binding</keyword>
<keyword id="KW-0594">Phospholipid biosynthesis</keyword>
<keyword id="KW-1208">Phospholipid metabolism</keyword>
<keyword id="KW-0808">Transferase</keyword>
<evidence type="ECO:0000255" key="1">
    <source>
        <dbReference type="HAMAP-Rule" id="MF_01377"/>
    </source>
</evidence>
<proteinExistence type="inferred from homology"/>
<organism>
    <name type="scientific">Escherichia coli (strain UTI89 / UPEC)</name>
    <dbReference type="NCBI Taxonomy" id="364106"/>
    <lineage>
        <taxon>Bacteria</taxon>
        <taxon>Pseudomonadati</taxon>
        <taxon>Pseudomonadota</taxon>
        <taxon>Gammaproteobacteria</taxon>
        <taxon>Enterobacterales</taxon>
        <taxon>Enterobacteriaceae</taxon>
        <taxon>Escherichia</taxon>
    </lineage>
</organism>
<protein>
    <recommendedName>
        <fullName evidence="1">Probable lipid kinase YegS</fullName>
        <ecNumber evidence="1">2.7.1.-</ecNumber>
    </recommendedName>
</protein>
<sequence length="299" mass="32018">MAEFPASLLILNGKSTDNLPLREAIMLLREEGMTIHVRVTWEKGDAARYVEEARKLGVATVIAGGGDGTINEVSTALIQCEGDDIPALGILPLGTANDFATSVGIPEALDKALKLAIAGNAIAIDMAQVNKQTCFINMATGGFGTRITTETPEKLKAALGGVSYIIHGLMRMDTLQPDRCEIRGENFHWQGDALVIGIGNGRQAGGGQQLCPNALINDGLLQLRIFTGDEIIPTLVSTLKSDEDNPNIIEGASSWFDIQAPHEITFNLDGEPLSGQNFHIEILPAALRCRLPPDCPLLR</sequence>
<feature type="chain" id="PRO_0000292142" description="Probable lipid kinase YegS">
    <location>
        <begin position="1"/>
        <end position="299"/>
    </location>
</feature>
<feature type="domain" description="DAGKc" evidence="1">
    <location>
        <begin position="2"/>
        <end position="133"/>
    </location>
</feature>
<feature type="active site" description="Proton acceptor" evidence="1">
    <location>
        <position position="271"/>
    </location>
</feature>
<feature type="binding site" evidence="1">
    <location>
        <position position="40"/>
    </location>
    <ligand>
        <name>ATP</name>
        <dbReference type="ChEBI" id="CHEBI:30616"/>
    </ligand>
</feature>
<feature type="binding site" evidence="1">
    <location>
        <begin position="66"/>
        <end position="72"/>
    </location>
    <ligand>
        <name>ATP</name>
        <dbReference type="ChEBI" id="CHEBI:30616"/>
    </ligand>
</feature>
<feature type="binding site" evidence="1">
    <location>
        <position position="95"/>
    </location>
    <ligand>
        <name>ATP</name>
        <dbReference type="ChEBI" id="CHEBI:30616"/>
    </ligand>
</feature>
<feature type="binding site" evidence="1">
    <location>
        <position position="215"/>
    </location>
    <ligand>
        <name>Mg(2+)</name>
        <dbReference type="ChEBI" id="CHEBI:18420"/>
    </ligand>
</feature>
<feature type="binding site" evidence="1">
    <location>
        <position position="218"/>
    </location>
    <ligand>
        <name>Mg(2+)</name>
        <dbReference type="ChEBI" id="CHEBI:18420"/>
    </ligand>
</feature>
<feature type="binding site" evidence="1">
    <location>
        <position position="220"/>
    </location>
    <ligand>
        <name>Mg(2+)</name>
        <dbReference type="ChEBI" id="CHEBI:18420"/>
    </ligand>
</feature>
<gene>
    <name evidence="1" type="primary">yegS</name>
    <name type="ordered locus">UTI89_C2362</name>
</gene>
<dbReference type="EC" id="2.7.1.-" evidence="1"/>
<dbReference type="EMBL" id="CP000243">
    <property type="protein sequence ID" value="ABE07830.1"/>
    <property type="molecule type" value="Genomic_DNA"/>
</dbReference>
<dbReference type="RefSeq" id="WP_000807360.1">
    <property type="nucleotide sequence ID" value="NZ_CP064825.1"/>
</dbReference>
<dbReference type="SMR" id="Q1R9Y4"/>
<dbReference type="KEGG" id="eci:UTI89_C2362"/>
<dbReference type="HOGENOM" id="CLU_045532_1_1_6"/>
<dbReference type="Proteomes" id="UP000001952">
    <property type="component" value="Chromosome"/>
</dbReference>
<dbReference type="GO" id="GO:0005737">
    <property type="term" value="C:cytoplasm"/>
    <property type="evidence" value="ECO:0007669"/>
    <property type="project" value="UniProtKB-SubCell"/>
</dbReference>
<dbReference type="GO" id="GO:0005886">
    <property type="term" value="C:plasma membrane"/>
    <property type="evidence" value="ECO:0007669"/>
    <property type="project" value="TreeGrafter"/>
</dbReference>
<dbReference type="GO" id="GO:0005524">
    <property type="term" value="F:ATP binding"/>
    <property type="evidence" value="ECO:0007669"/>
    <property type="project" value="UniProtKB-UniRule"/>
</dbReference>
<dbReference type="GO" id="GO:0001727">
    <property type="term" value="F:lipid kinase activity"/>
    <property type="evidence" value="ECO:0007669"/>
    <property type="project" value="UniProtKB-UniRule"/>
</dbReference>
<dbReference type="GO" id="GO:0000287">
    <property type="term" value="F:magnesium ion binding"/>
    <property type="evidence" value="ECO:0007669"/>
    <property type="project" value="UniProtKB-UniRule"/>
</dbReference>
<dbReference type="GO" id="GO:0008654">
    <property type="term" value="P:phospholipid biosynthetic process"/>
    <property type="evidence" value="ECO:0007669"/>
    <property type="project" value="UniProtKB-UniRule"/>
</dbReference>
<dbReference type="FunFam" id="2.60.200.40:FF:000008">
    <property type="entry name" value="Probable lipid kinase YegS"/>
    <property type="match status" value="1"/>
</dbReference>
<dbReference type="FunFam" id="3.40.50.10330:FF:000008">
    <property type="entry name" value="Probable lipid kinase YegS"/>
    <property type="match status" value="1"/>
</dbReference>
<dbReference type="Gene3D" id="2.60.200.40">
    <property type="match status" value="1"/>
</dbReference>
<dbReference type="Gene3D" id="3.40.50.10330">
    <property type="entry name" value="Probable inorganic polyphosphate/atp-NAD kinase, domain 1"/>
    <property type="match status" value="1"/>
</dbReference>
<dbReference type="HAMAP" id="MF_01377">
    <property type="entry name" value="YegS"/>
    <property type="match status" value="1"/>
</dbReference>
<dbReference type="InterPro" id="IPR017438">
    <property type="entry name" value="ATP-NAD_kinase_N"/>
</dbReference>
<dbReference type="InterPro" id="IPR005218">
    <property type="entry name" value="Diacylglycerol/lipid_kinase"/>
</dbReference>
<dbReference type="InterPro" id="IPR001206">
    <property type="entry name" value="Diacylglycerol_kinase_cat_dom"/>
</dbReference>
<dbReference type="InterPro" id="IPR022433">
    <property type="entry name" value="Lip_kinase_YegS"/>
</dbReference>
<dbReference type="InterPro" id="IPR050187">
    <property type="entry name" value="Lipid_Phosphate_FormReg"/>
</dbReference>
<dbReference type="InterPro" id="IPR016064">
    <property type="entry name" value="NAD/diacylglycerol_kinase_sf"/>
</dbReference>
<dbReference type="InterPro" id="IPR045540">
    <property type="entry name" value="YegS/DAGK_C"/>
</dbReference>
<dbReference type="NCBIfam" id="TIGR03702">
    <property type="entry name" value="lip_kinase_YegS"/>
    <property type="match status" value="1"/>
</dbReference>
<dbReference type="NCBIfam" id="NF009602">
    <property type="entry name" value="PRK13054.1"/>
    <property type="match status" value="1"/>
</dbReference>
<dbReference type="NCBIfam" id="TIGR00147">
    <property type="entry name" value="YegS/Rv2252/BmrU family lipid kinase"/>
    <property type="match status" value="1"/>
</dbReference>
<dbReference type="PANTHER" id="PTHR12358:SF106">
    <property type="entry name" value="LIPID KINASE YEGS"/>
    <property type="match status" value="1"/>
</dbReference>
<dbReference type="PANTHER" id="PTHR12358">
    <property type="entry name" value="SPHINGOSINE KINASE"/>
    <property type="match status" value="1"/>
</dbReference>
<dbReference type="Pfam" id="PF00781">
    <property type="entry name" value="DAGK_cat"/>
    <property type="match status" value="1"/>
</dbReference>
<dbReference type="Pfam" id="PF19279">
    <property type="entry name" value="YegS_C"/>
    <property type="match status" value="1"/>
</dbReference>
<dbReference type="SMART" id="SM00046">
    <property type="entry name" value="DAGKc"/>
    <property type="match status" value="1"/>
</dbReference>
<dbReference type="SUPFAM" id="SSF111331">
    <property type="entry name" value="NAD kinase/diacylglycerol kinase-like"/>
    <property type="match status" value="1"/>
</dbReference>
<dbReference type="PROSITE" id="PS50146">
    <property type="entry name" value="DAGK"/>
    <property type="match status" value="1"/>
</dbReference>
<name>YEGS_ECOUT</name>
<comment type="function">
    <text evidence="1">Probably phosphorylates lipids; the in vivo substrate is unknown.</text>
</comment>
<comment type="cofactor">
    <cofactor evidence="1">
        <name>Mg(2+)</name>
        <dbReference type="ChEBI" id="CHEBI:18420"/>
    </cofactor>
    <cofactor evidence="1">
        <name>Ca(2+)</name>
        <dbReference type="ChEBI" id="CHEBI:29108"/>
    </cofactor>
    <text evidence="1">Binds 1 Mg(2+) ion per subunit. Ca(2+) may be able to substitute.</text>
</comment>
<comment type="subcellular location">
    <subcellularLocation>
        <location evidence="1">Cytoplasm</location>
    </subcellularLocation>
</comment>
<comment type="similarity">
    <text evidence="1">Belongs to the diacylglycerol/lipid kinase family. YegS lipid kinase subfamily.</text>
</comment>